<keyword id="KW-0963">Cytoplasm</keyword>
<keyword id="KW-0235">DNA replication</keyword>
<keyword id="KW-0239">DNA-directed DNA polymerase</keyword>
<keyword id="KW-0269">Exonuclease</keyword>
<keyword id="KW-0378">Hydrolase</keyword>
<keyword id="KW-0540">Nuclease</keyword>
<keyword id="KW-0548">Nucleotidyltransferase</keyword>
<keyword id="KW-0808">Transferase</keyword>
<feature type="chain" id="PRO_1000048484" description="DNA polymerase III PolC-type">
    <location>
        <begin position="1"/>
        <end position="1465"/>
    </location>
</feature>
<feature type="domain" description="Exonuclease">
    <location>
        <begin position="427"/>
        <end position="583"/>
    </location>
</feature>
<dbReference type="EC" id="2.7.7.7" evidence="1"/>
<dbReference type="EMBL" id="CP000261">
    <property type="protein sequence ID" value="ABF36747.1"/>
    <property type="molecule type" value="Genomic_DNA"/>
</dbReference>
<dbReference type="SMR" id="Q1J9R4"/>
<dbReference type="KEGG" id="spj:MGAS2096_Spy1695"/>
<dbReference type="HOGENOM" id="CLU_003297_2_0_9"/>
<dbReference type="GO" id="GO:0005737">
    <property type="term" value="C:cytoplasm"/>
    <property type="evidence" value="ECO:0007669"/>
    <property type="project" value="UniProtKB-SubCell"/>
</dbReference>
<dbReference type="GO" id="GO:0008408">
    <property type="term" value="F:3'-5' exonuclease activity"/>
    <property type="evidence" value="ECO:0007669"/>
    <property type="project" value="UniProtKB-UniRule"/>
</dbReference>
<dbReference type="GO" id="GO:0003677">
    <property type="term" value="F:DNA binding"/>
    <property type="evidence" value="ECO:0007669"/>
    <property type="project" value="UniProtKB-UniRule"/>
</dbReference>
<dbReference type="GO" id="GO:0003887">
    <property type="term" value="F:DNA-directed DNA polymerase activity"/>
    <property type="evidence" value="ECO:0007669"/>
    <property type="project" value="UniProtKB-UniRule"/>
</dbReference>
<dbReference type="GO" id="GO:0006261">
    <property type="term" value="P:DNA-templated DNA replication"/>
    <property type="evidence" value="ECO:0007669"/>
    <property type="project" value="UniProtKB-UniRule"/>
</dbReference>
<dbReference type="CDD" id="cd06127">
    <property type="entry name" value="DEDDh"/>
    <property type="match status" value="1"/>
</dbReference>
<dbReference type="CDD" id="cd07435">
    <property type="entry name" value="PHP_PolIIIA_POLC"/>
    <property type="match status" value="1"/>
</dbReference>
<dbReference type="CDD" id="cd04484">
    <property type="entry name" value="polC_OBF"/>
    <property type="match status" value="1"/>
</dbReference>
<dbReference type="FunFam" id="3.30.420.10:FF:000045">
    <property type="entry name" value="3'-5' exonuclease DinG"/>
    <property type="match status" value="1"/>
</dbReference>
<dbReference type="Gene3D" id="1.10.150.870">
    <property type="match status" value="1"/>
</dbReference>
<dbReference type="Gene3D" id="3.30.1900.20">
    <property type="match status" value="1"/>
</dbReference>
<dbReference type="Gene3D" id="6.10.140.1510">
    <property type="match status" value="1"/>
</dbReference>
<dbReference type="Gene3D" id="3.20.20.140">
    <property type="entry name" value="Metal-dependent hydrolases"/>
    <property type="match status" value="1"/>
</dbReference>
<dbReference type="Gene3D" id="2.40.50.140">
    <property type="entry name" value="Nucleic acid-binding proteins"/>
    <property type="match status" value="1"/>
</dbReference>
<dbReference type="Gene3D" id="1.10.150.700">
    <property type="entry name" value="PolC, middle finger domain"/>
    <property type="match status" value="1"/>
</dbReference>
<dbReference type="Gene3D" id="3.30.420.10">
    <property type="entry name" value="Ribonuclease H-like superfamily/Ribonuclease H"/>
    <property type="match status" value="1"/>
</dbReference>
<dbReference type="HAMAP" id="MF_00356">
    <property type="entry name" value="DNApol_PolC"/>
    <property type="match status" value="1"/>
</dbReference>
<dbReference type="InterPro" id="IPR011708">
    <property type="entry name" value="DNA_pol3_alpha_NTPase_dom"/>
</dbReference>
<dbReference type="InterPro" id="IPR040982">
    <property type="entry name" value="DNA_pol3_finger"/>
</dbReference>
<dbReference type="InterPro" id="IPR024754">
    <property type="entry name" value="DNA_PolC-like_N_II"/>
</dbReference>
<dbReference type="InterPro" id="IPR028112">
    <property type="entry name" value="DNA_PolC-type_N_I"/>
</dbReference>
<dbReference type="InterPro" id="IPR004805">
    <property type="entry name" value="DnaE2/DnaE/PolC"/>
</dbReference>
<dbReference type="InterPro" id="IPR029460">
    <property type="entry name" value="DNAPol_HHH"/>
</dbReference>
<dbReference type="InterPro" id="IPR006054">
    <property type="entry name" value="DnaQ"/>
</dbReference>
<dbReference type="InterPro" id="IPR013520">
    <property type="entry name" value="Exonuclease_RNaseT/DNA_pol3"/>
</dbReference>
<dbReference type="InterPro" id="IPR012340">
    <property type="entry name" value="NA-bd_OB-fold"/>
</dbReference>
<dbReference type="InterPro" id="IPR004013">
    <property type="entry name" value="PHP_dom"/>
</dbReference>
<dbReference type="InterPro" id="IPR003141">
    <property type="entry name" value="Pol/His_phosphatase_N"/>
</dbReference>
<dbReference type="InterPro" id="IPR016195">
    <property type="entry name" value="Pol/histidinol_Pase-like"/>
</dbReference>
<dbReference type="InterPro" id="IPR006308">
    <property type="entry name" value="Pol_III_a_PolC-type_gram_pos"/>
</dbReference>
<dbReference type="InterPro" id="IPR044923">
    <property type="entry name" value="PolC_middle_finger_sf"/>
</dbReference>
<dbReference type="InterPro" id="IPR012337">
    <property type="entry name" value="RNaseH-like_sf"/>
</dbReference>
<dbReference type="InterPro" id="IPR036397">
    <property type="entry name" value="RNaseH_sf"/>
</dbReference>
<dbReference type="NCBIfam" id="TIGR00573">
    <property type="entry name" value="dnaq"/>
    <property type="match status" value="1"/>
</dbReference>
<dbReference type="NCBIfam" id="TIGR01405">
    <property type="entry name" value="polC_Gram_pos"/>
    <property type="match status" value="1"/>
</dbReference>
<dbReference type="NCBIfam" id="NF001688">
    <property type="entry name" value="PRK00448.1"/>
    <property type="match status" value="1"/>
</dbReference>
<dbReference type="PANTHER" id="PTHR32294:SF5">
    <property type="entry name" value="DNA POLYMERASE III POLC-TYPE"/>
    <property type="match status" value="1"/>
</dbReference>
<dbReference type="PANTHER" id="PTHR32294">
    <property type="entry name" value="DNA POLYMERASE III SUBUNIT ALPHA"/>
    <property type="match status" value="1"/>
</dbReference>
<dbReference type="Pfam" id="PF14480">
    <property type="entry name" value="DNA_pol3_a_NI"/>
    <property type="match status" value="1"/>
</dbReference>
<dbReference type="Pfam" id="PF11490">
    <property type="entry name" value="DNA_pol3_a_NII"/>
    <property type="match status" value="1"/>
</dbReference>
<dbReference type="Pfam" id="PF07733">
    <property type="entry name" value="DNA_pol3_alpha"/>
    <property type="match status" value="2"/>
</dbReference>
<dbReference type="Pfam" id="PF17657">
    <property type="entry name" value="DNA_pol3_finger"/>
    <property type="match status" value="1"/>
</dbReference>
<dbReference type="Pfam" id="PF14579">
    <property type="entry name" value="HHH_6"/>
    <property type="match status" value="1"/>
</dbReference>
<dbReference type="Pfam" id="PF02811">
    <property type="entry name" value="PHP"/>
    <property type="match status" value="2"/>
</dbReference>
<dbReference type="Pfam" id="PF00929">
    <property type="entry name" value="RNase_T"/>
    <property type="match status" value="1"/>
</dbReference>
<dbReference type="SMART" id="SM00479">
    <property type="entry name" value="EXOIII"/>
    <property type="match status" value="1"/>
</dbReference>
<dbReference type="SMART" id="SM00481">
    <property type="entry name" value="POLIIIAc"/>
    <property type="match status" value="1"/>
</dbReference>
<dbReference type="SUPFAM" id="SSF50249">
    <property type="entry name" value="Nucleic acid-binding proteins"/>
    <property type="match status" value="1"/>
</dbReference>
<dbReference type="SUPFAM" id="SSF89550">
    <property type="entry name" value="PHP domain-like"/>
    <property type="match status" value="1"/>
</dbReference>
<dbReference type="SUPFAM" id="SSF53098">
    <property type="entry name" value="Ribonuclease H-like"/>
    <property type="match status" value="1"/>
</dbReference>
<name>DPO3_STRPB</name>
<accession>Q1J9R4</accession>
<reference key="1">
    <citation type="journal article" date="2006" name="Proc. Natl. Acad. Sci. U.S.A.">
        <title>Molecular genetic anatomy of inter- and intraserotype variation in the human bacterial pathogen group A Streptococcus.</title>
        <authorList>
            <person name="Beres S.B."/>
            <person name="Richter E.W."/>
            <person name="Nagiec M.J."/>
            <person name="Sumby P."/>
            <person name="Porcella S.F."/>
            <person name="DeLeo F.R."/>
            <person name="Musser J.M."/>
        </authorList>
    </citation>
    <scope>NUCLEOTIDE SEQUENCE [LARGE SCALE GENOMIC DNA]</scope>
    <source>
        <strain>MGAS2096</strain>
    </source>
</reference>
<protein>
    <recommendedName>
        <fullName evidence="1">DNA polymerase III PolC-type</fullName>
        <shortName evidence="1">PolIII</shortName>
        <ecNumber evidence="1">2.7.7.7</ecNumber>
    </recommendedName>
</protein>
<proteinExistence type="inferred from homology"/>
<organism>
    <name type="scientific">Streptococcus pyogenes serotype M12 (strain MGAS2096)</name>
    <dbReference type="NCBI Taxonomy" id="370553"/>
    <lineage>
        <taxon>Bacteria</taxon>
        <taxon>Bacillati</taxon>
        <taxon>Bacillota</taxon>
        <taxon>Bacilli</taxon>
        <taxon>Lactobacillales</taxon>
        <taxon>Streptococcaceae</taxon>
        <taxon>Streptococcus</taxon>
    </lineage>
</organism>
<evidence type="ECO:0000255" key="1">
    <source>
        <dbReference type="HAMAP-Rule" id="MF_00356"/>
    </source>
</evidence>
<sequence length="1465" mass="164640">MSDLFAKLMDQIEMPLDMRRSSAFSSADIIEVKVHSVSRLWEFHFAFAAVLPIATYRELHDRLIRTFEAADIKVTFDIQAAQVDYSDDLLQAYYQEAFEHAPCNSASFKSSFSKLKVTYEDDKLIIAAPGFVNNDHFRNNHLPNLVKQLEAFGFGTLTIDMVSDQEMTEHLTKDFVSSRQALVKKAVQDNLEAQKSLEAMMPPVEEATPAPKFDYKERAAKRQAGFEKATITPMIEIETEENRIVFEGMVFDVERKTTRTGRHIINFKMTDYTSSFALQKWAKDDEELRKFDMIAKGAWLRVQGNIETNPFTKSLTMNVQQVKEIVHHDRKDLMPEGQKRVELHAHTNMSTMDALPTVESLIDTAAKWGHKAVAITDHANVQSFPHGYHRARKAGIKAIFGLEANIVEDKVPISYDPVDMDLHEATYVVFDVETTGLSAMNNDLIQIAASKMFKGNIVEQFDEFIDPGHPLSAFTTELTGITDKHLQGAKPLVTVLKAFQDFCKDSILVAHNASFDVGFMNANYERHDLPKITQPVIDTLEFARNLYPEYKRHGLGPLTKRFQVSLDHHHMANYDAEATGRLLFIFLRDAREKHGIKNLLQLNTDLVAEDSYKKARIKHATIYVQNQVGLKNMFKLVSLSNIKYFEGVPRIPRTVLDAHREGLLLGTACSDGEVFDAVLTKGIDAAVDLAKYYDFIEIMPPAIYQPLVVRELIKDQAGIEQVIRDLIEVGKRAKKPVLATGNVHYLEPEEEIYREIIVRSLGQGAMINRTIGRGEGAQPAPLPKAHFRTTNEMLDEFAFLGKDLAYQVVVQNTQDFADRIEEVEVVKGDLYTPYIDKAEETVAELTYQKAFEIYGNPLPDIIDLRIEKELTSILGNGFAVIYLASQMLVNRSNERGYLVGSRGSVGSSFVATMIGITEVNPMPPHYVCPSCQHSEFITDGSVGSGYDLPNKPCPKCGTPYQKDGQDIPFETFLGFDGDKVPDIDLNFSGDDQPSAHLDVRDIFGDEYAFRAGTVGTVAEKTAYGFVKGYERDYGKFYRDAEVDRLAAGAAGVKRTTGQHPGGIVVIPNYMDVYDFTPVQYPADDVTASWQTTHFNFHDIDENVLKLDILGHDDPTMIRKLQDLSGIDPITIPADDPGVMALFSGTEILGVTPEQIGTPTGMLGIPEFGTNFVRGMVNETHPTTFAELLQLSGLSHGTDVWLGNAQDLIKEGIATLKTVIGCRDDIMVYLMHAGLEPKMAFTIMERVRKGLWLKISEEERNGYIDAMRENNVPDWYIESCGKIKYMFPKAHAAAYVLMALRVAYFKVHHPIMYYCAYFSIRAKAFELKTMSGGLDAVKARMEDITIKRKNNEATNVENDLFTTLEIVNEMLERGFKFGKLDLYKSDAIEFQIKGDTLIPPFIALEGLGENVAKQIVKARQEGEFLSKMELRKRGGASSTLVEKMDEMSILGNMPEDNQLSLFDDFF</sequence>
<comment type="function">
    <text evidence="1">Required for replicative DNA synthesis. This DNA polymerase also exhibits 3' to 5' exonuclease activity.</text>
</comment>
<comment type="catalytic activity">
    <reaction evidence="1">
        <text>DNA(n) + a 2'-deoxyribonucleoside 5'-triphosphate = DNA(n+1) + diphosphate</text>
        <dbReference type="Rhea" id="RHEA:22508"/>
        <dbReference type="Rhea" id="RHEA-COMP:17339"/>
        <dbReference type="Rhea" id="RHEA-COMP:17340"/>
        <dbReference type="ChEBI" id="CHEBI:33019"/>
        <dbReference type="ChEBI" id="CHEBI:61560"/>
        <dbReference type="ChEBI" id="CHEBI:173112"/>
        <dbReference type="EC" id="2.7.7.7"/>
    </reaction>
</comment>
<comment type="subcellular location">
    <subcellularLocation>
        <location evidence="1">Cytoplasm</location>
    </subcellularLocation>
</comment>
<comment type="similarity">
    <text evidence="1">Belongs to the DNA polymerase type-C family. PolC subfamily.</text>
</comment>
<gene>
    <name evidence="1" type="primary">polC</name>
    <name type="ordered locus">MGAS2096_Spy1695</name>
</gene>